<keyword id="KW-0067">ATP-binding</keyword>
<keyword id="KW-0963">Cytoplasm</keyword>
<keyword id="KW-0418">Kinase</keyword>
<keyword id="KW-0545">Nucleotide biosynthesis</keyword>
<keyword id="KW-0547">Nucleotide-binding</keyword>
<keyword id="KW-0808">Transferase</keyword>
<protein>
    <recommendedName>
        <fullName evidence="1">Adenylate kinase</fullName>
        <shortName evidence="1">AK</shortName>
        <ecNumber evidence="1">2.7.4.3</ecNumber>
    </recommendedName>
    <alternativeName>
        <fullName evidence="1">ATP-AMP transphosphorylase</fullName>
    </alternativeName>
    <alternativeName>
        <fullName evidence="1">ATP:AMP phosphotransferase</fullName>
    </alternativeName>
    <alternativeName>
        <fullName evidence="1">Adenylate monophosphate kinase</fullName>
    </alternativeName>
</protein>
<feature type="chain" id="PRO_1000058917" description="Adenylate kinase">
    <location>
        <begin position="1"/>
        <end position="212"/>
    </location>
</feature>
<feature type="region of interest" description="NMP" evidence="1">
    <location>
        <begin position="30"/>
        <end position="59"/>
    </location>
</feature>
<feature type="region of interest" description="LID" evidence="1">
    <location>
        <begin position="127"/>
        <end position="159"/>
    </location>
</feature>
<feature type="binding site" evidence="1">
    <location>
        <begin position="10"/>
        <end position="15"/>
    </location>
    <ligand>
        <name>ATP</name>
        <dbReference type="ChEBI" id="CHEBI:30616"/>
    </ligand>
</feature>
<feature type="binding site" evidence="1">
    <location>
        <position position="31"/>
    </location>
    <ligand>
        <name>AMP</name>
        <dbReference type="ChEBI" id="CHEBI:456215"/>
    </ligand>
</feature>
<feature type="binding site" evidence="1">
    <location>
        <position position="36"/>
    </location>
    <ligand>
        <name>AMP</name>
        <dbReference type="ChEBI" id="CHEBI:456215"/>
    </ligand>
</feature>
<feature type="binding site" evidence="1">
    <location>
        <begin position="57"/>
        <end position="59"/>
    </location>
    <ligand>
        <name>AMP</name>
        <dbReference type="ChEBI" id="CHEBI:456215"/>
    </ligand>
</feature>
<feature type="binding site" evidence="1">
    <location>
        <begin position="86"/>
        <end position="89"/>
    </location>
    <ligand>
        <name>AMP</name>
        <dbReference type="ChEBI" id="CHEBI:456215"/>
    </ligand>
</feature>
<feature type="binding site" evidence="1">
    <location>
        <position position="93"/>
    </location>
    <ligand>
        <name>AMP</name>
        <dbReference type="ChEBI" id="CHEBI:456215"/>
    </ligand>
</feature>
<feature type="binding site" evidence="1">
    <location>
        <position position="128"/>
    </location>
    <ligand>
        <name>ATP</name>
        <dbReference type="ChEBI" id="CHEBI:30616"/>
    </ligand>
</feature>
<feature type="binding site" evidence="1">
    <location>
        <begin position="137"/>
        <end position="138"/>
    </location>
    <ligand>
        <name>ATP</name>
        <dbReference type="ChEBI" id="CHEBI:30616"/>
    </ligand>
</feature>
<feature type="binding site" evidence="1">
    <location>
        <position position="156"/>
    </location>
    <ligand>
        <name>AMP</name>
        <dbReference type="ChEBI" id="CHEBI:456215"/>
    </ligand>
</feature>
<feature type="binding site" evidence="1">
    <location>
        <position position="167"/>
    </location>
    <ligand>
        <name>AMP</name>
        <dbReference type="ChEBI" id="CHEBI:456215"/>
    </ligand>
</feature>
<feature type="binding site" evidence="1">
    <location>
        <position position="195"/>
    </location>
    <ligand>
        <name>ATP</name>
        <dbReference type="ChEBI" id="CHEBI:30616"/>
    </ligand>
</feature>
<sequence length="212" mass="23744">MNLLIMGLPGAGKGTQAAKIVEEFGVAHISTGDMFRAAMANQTEMGRLAKSYIDKGELVPDEVTNGIVKERLAEDDIAEKGFLLDGYPRTIEQAHALDATLEELGLRLDGVINIKVDPSCLVERLSGRIINRKTGETFHKVFNPPVDYKEEDYYQREDDKPETVKRRLDVNMAQGEPILEHYRKLDLVTDIEGNQEITDVFADVEKALLELK</sequence>
<comment type="function">
    <text evidence="1">Catalyzes the reversible transfer of the terminal phosphate group between ATP and AMP. Plays an important role in cellular energy homeostasis and in adenine nucleotide metabolism.</text>
</comment>
<comment type="catalytic activity">
    <reaction evidence="1">
        <text>AMP + ATP = 2 ADP</text>
        <dbReference type="Rhea" id="RHEA:12973"/>
        <dbReference type="ChEBI" id="CHEBI:30616"/>
        <dbReference type="ChEBI" id="CHEBI:456215"/>
        <dbReference type="ChEBI" id="CHEBI:456216"/>
        <dbReference type="EC" id="2.7.4.3"/>
    </reaction>
</comment>
<comment type="pathway">
    <text evidence="1">Purine metabolism; AMP biosynthesis via salvage pathway; AMP from ADP: step 1/1.</text>
</comment>
<comment type="subunit">
    <text evidence="1">Monomer.</text>
</comment>
<comment type="subcellular location">
    <subcellularLocation>
        <location evidence="1">Cytoplasm</location>
    </subcellularLocation>
</comment>
<comment type="domain">
    <text evidence="1">Consists of three domains, a large central CORE domain and two small peripheral domains, NMPbind and LID, which undergo movements during catalysis. The LID domain closes over the site of phosphoryl transfer upon ATP binding. Assembling and dissambling the active center during each catalytic cycle provides an effective means to prevent ATP hydrolysis.</text>
</comment>
<comment type="similarity">
    <text evidence="1">Belongs to the adenylate kinase family.</text>
</comment>
<dbReference type="EC" id="2.7.4.3" evidence="1"/>
<dbReference type="EMBL" id="AM295007">
    <property type="protein sequence ID" value="CAM29407.1"/>
    <property type="molecule type" value="Genomic_DNA"/>
</dbReference>
<dbReference type="RefSeq" id="WP_002986617.1">
    <property type="nucleotide sequence ID" value="NC_009332.1"/>
</dbReference>
<dbReference type="SMR" id="A2RC35"/>
<dbReference type="KEGG" id="spf:SpyM50065"/>
<dbReference type="HOGENOM" id="CLU_032354_1_2_9"/>
<dbReference type="UniPathway" id="UPA00588">
    <property type="reaction ID" value="UER00649"/>
</dbReference>
<dbReference type="GO" id="GO:0005737">
    <property type="term" value="C:cytoplasm"/>
    <property type="evidence" value="ECO:0007669"/>
    <property type="project" value="UniProtKB-SubCell"/>
</dbReference>
<dbReference type="GO" id="GO:0004017">
    <property type="term" value="F:adenylate kinase activity"/>
    <property type="evidence" value="ECO:0007669"/>
    <property type="project" value="UniProtKB-UniRule"/>
</dbReference>
<dbReference type="GO" id="GO:0005524">
    <property type="term" value="F:ATP binding"/>
    <property type="evidence" value="ECO:0007669"/>
    <property type="project" value="UniProtKB-UniRule"/>
</dbReference>
<dbReference type="GO" id="GO:0044209">
    <property type="term" value="P:AMP salvage"/>
    <property type="evidence" value="ECO:0007669"/>
    <property type="project" value="UniProtKB-UniRule"/>
</dbReference>
<dbReference type="CDD" id="cd01428">
    <property type="entry name" value="ADK"/>
    <property type="match status" value="1"/>
</dbReference>
<dbReference type="FunFam" id="3.40.50.300:FF:000106">
    <property type="entry name" value="Adenylate kinase mitochondrial"/>
    <property type="match status" value="1"/>
</dbReference>
<dbReference type="Gene3D" id="3.40.50.300">
    <property type="entry name" value="P-loop containing nucleotide triphosphate hydrolases"/>
    <property type="match status" value="1"/>
</dbReference>
<dbReference type="HAMAP" id="MF_00235">
    <property type="entry name" value="Adenylate_kinase_Adk"/>
    <property type="match status" value="1"/>
</dbReference>
<dbReference type="InterPro" id="IPR006259">
    <property type="entry name" value="Adenyl_kin_sub"/>
</dbReference>
<dbReference type="InterPro" id="IPR000850">
    <property type="entry name" value="Adenylat/UMP-CMP_kin"/>
</dbReference>
<dbReference type="InterPro" id="IPR033690">
    <property type="entry name" value="Adenylat_kinase_CS"/>
</dbReference>
<dbReference type="InterPro" id="IPR027417">
    <property type="entry name" value="P-loop_NTPase"/>
</dbReference>
<dbReference type="NCBIfam" id="TIGR01351">
    <property type="entry name" value="adk"/>
    <property type="match status" value="1"/>
</dbReference>
<dbReference type="NCBIfam" id="NF001380">
    <property type="entry name" value="PRK00279.1-2"/>
    <property type="match status" value="1"/>
</dbReference>
<dbReference type="NCBIfam" id="NF001381">
    <property type="entry name" value="PRK00279.1-3"/>
    <property type="match status" value="1"/>
</dbReference>
<dbReference type="NCBIfam" id="NF001382">
    <property type="entry name" value="PRK00279.1-4"/>
    <property type="match status" value="1"/>
</dbReference>
<dbReference type="PANTHER" id="PTHR23359">
    <property type="entry name" value="NUCLEOTIDE KINASE"/>
    <property type="match status" value="1"/>
</dbReference>
<dbReference type="Pfam" id="PF00406">
    <property type="entry name" value="ADK"/>
    <property type="match status" value="1"/>
</dbReference>
<dbReference type="PRINTS" id="PR00094">
    <property type="entry name" value="ADENYLTKNASE"/>
</dbReference>
<dbReference type="SUPFAM" id="SSF52540">
    <property type="entry name" value="P-loop containing nucleoside triphosphate hydrolases"/>
    <property type="match status" value="1"/>
</dbReference>
<dbReference type="PROSITE" id="PS00113">
    <property type="entry name" value="ADENYLATE_KINASE"/>
    <property type="match status" value="1"/>
</dbReference>
<proteinExistence type="inferred from homology"/>
<accession>A2RC35</accession>
<name>KAD_STRPG</name>
<gene>
    <name evidence="1" type="primary">adk</name>
    <name type="ordered locus">SpyM50065</name>
</gene>
<organism>
    <name type="scientific">Streptococcus pyogenes serotype M5 (strain Manfredo)</name>
    <dbReference type="NCBI Taxonomy" id="160491"/>
    <lineage>
        <taxon>Bacteria</taxon>
        <taxon>Bacillati</taxon>
        <taxon>Bacillota</taxon>
        <taxon>Bacilli</taxon>
        <taxon>Lactobacillales</taxon>
        <taxon>Streptococcaceae</taxon>
        <taxon>Streptococcus</taxon>
    </lineage>
</organism>
<evidence type="ECO:0000255" key="1">
    <source>
        <dbReference type="HAMAP-Rule" id="MF_00235"/>
    </source>
</evidence>
<reference key="1">
    <citation type="journal article" date="2007" name="J. Bacteriol.">
        <title>Complete genome of acute rheumatic fever-associated serotype M5 Streptococcus pyogenes strain Manfredo.</title>
        <authorList>
            <person name="Holden M.T.G."/>
            <person name="Scott A."/>
            <person name="Cherevach I."/>
            <person name="Chillingworth T."/>
            <person name="Churcher C."/>
            <person name="Cronin A."/>
            <person name="Dowd L."/>
            <person name="Feltwell T."/>
            <person name="Hamlin N."/>
            <person name="Holroyd S."/>
            <person name="Jagels K."/>
            <person name="Moule S."/>
            <person name="Mungall K."/>
            <person name="Quail M.A."/>
            <person name="Price C."/>
            <person name="Rabbinowitsch E."/>
            <person name="Sharp S."/>
            <person name="Skelton J."/>
            <person name="Whitehead S."/>
            <person name="Barrell B.G."/>
            <person name="Kehoe M."/>
            <person name="Parkhill J."/>
        </authorList>
    </citation>
    <scope>NUCLEOTIDE SEQUENCE [LARGE SCALE GENOMIC DNA]</scope>
    <source>
        <strain>Manfredo</strain>
    </source>
</reference>